<accession>Q57L56</accession>
<dbReference type="EMBL" id="AE017220">
    <property type="protein sequence ID" value="AAX66556.1"/>
    <property type="molecule type" value="Genomic_DNA"/>
</dbReference>
<dbReference type="RefSeq" id="WP_000188414.1">
    <property type="nucleotide sequence ID" value="NC_006905.1"/>
</dbReference>
<dbReference type="KEGG" id="sec:SCH_2650"/>
<dbReference type="HOGENOM" id="CLU_079569_1_2_6"/>
<dbReference type="Proteomes" id="UP000000538">
    <property type="component" value="Chromosome"/>
</dbReference>
<dbReference type="GO" id="GO:0005886">
    <property type="term" value="C:plasma membrane"/>
    <property type="evidence" value="ECO:0007669"/>
    <property type="project" value="UniProtKB-SubCell"/>
</dbReference>
<dbReference type="GO" id="GO:0015171">
    <property type="term" value="F:amino acid transmembrane transporter activity"/>
    <property type="evidence" value="ECO:0007669"/>
    <property type="project" value="TreeGrafter"/>
</dbReference>
<dbReference type="GO" id="GO:0033228">
    <property type="term" value="P:cysteine export across plasma membrane"/>
    <property type="evidence" value="ECO:0007669"/>
    <property type="project" value="TreeGrafter"/>
</dbReference>
<dbReference type="InterPro" id="IPR001123">
    <property type="entry name" value="LeuE-type"/>
</dbReference>
<dbReference type="NCBIfam" id="NF007653">
    <property type="entry name" value="PRK10323.1"/>
    <property type="match status" value="1"/>
</dbReference>
<dbReference type="PANTHER" id="PTHR30086">
    <property type="entry name" value="ARGININE EXPORTER PROTEIN ARGO"/>
    <property type="match status" value="1"/>
</dbReference>
<dbReference type="PANTHER" id="PTHR30086:SF20">
    <property type="entry name" value="ARGININE EXPORTER PROTEIN ARGO-RELATED"/>
    <property type="match status" value="1"/>
</dbReference>
<dbReference type="Pfam" id="PF01810">
    <property type="entry name" value="LysE"/>
    <property type="match status" value="1"/>
</dbReference>
<proteinExistence type="inferred from homology"/>
<organism>
    <name type="scientific">Salmonella choleraesuis (strain SC-B67)</name>
    <dbReference type="NCBI Taxonomy" id="321314"/>
    <lineage>
        <taxon>Bacteria</taxon>
        <taxon>Pseudomonadati</taxon>
        <taxon>Pseudomonadota</taxon>
        <taxon>Gammaproteobacteria</taxon>
        <taxon>Enterobacterales</taxon>
        <taxon>Enterobacteriaceae</taxon>
        <taxon>Salmonella</taxon>
    </lineage>
</organism>
<sequence length="195" mass="21293">MTPMLLSAFWTYTLITALTPGPNNILALSAATAHGFRQSIRVLAGMSLGFLVVMLLCAGIAFSLAVIDPAIIHLLSWVGAAYILWLAWKIATSPAADENARPKPVGFWVSFGLQFVNVKIILYGITALSTFVLPQTQALNWVIGVSILLALIGTFGNVCWALAGHLFQRAFRHYGRQLNIILALLLVYCAVRIFY</sequence>
<gene>
    <name type="primary">eamB</name>
    <name type="ordered locus">SCH_2650</name>
</gene>
<feature type="chain" id="PRO_0000318728" description="Cysteine/O-acetylserine efflux protein">
    <location>
        <begin position="1"/>
        <end position="195"/>
    </location>
</feature>
<feature type="topological domain" description="Periplasmic" evidence="2">
    <location>
        <begin position="1"/>
        <end position="9"/>
    </location>
</feature>
<feature type="transmembrane region" description="Helical" evidence="2">
    <location>
        <begin position="10"/>
        <end position="32"/>
    </location>
</feature>
<feature type="topological domain" description="Cytoplasmic" evidence="2">
    <location>
        <begin position="33"/>
        <end position="46"/>
    </location>
</feature>
<feature type="transmembrane region" description="Helical" evidence="2">
    <location>
        <begin position="47"/>
        <end position="67"/>
    </location>
</feature>
<feature type="topological domain" description="Periplasmic" evidence="2">
    <location>
        <begin position="68"/>
        <end position="69"/>
    </location>
</feature>
<feature type="transmembrane region" description="Helical" evidence="2">
    <location>
        <begin position="70"/>
        <end position="90"/>
    </location>
</feature>
<feature type="topological domain" description="Cytoplasmic" evidence="2">
    <location>
        <begin position="91"/>
        <end position="104"/>
    </location>
</feature>
<feature type="transmembrane region" description="Helical" evidence="2">
    <location>
        <begin position="105"/>
        <end position="125"/>
    </location>
</feature>
<feature type="topological domain" description="Periplasmic" evidence="2">
    <location>
        <begin position="126"/>
        <end position="141"/>
    </location>
</feature>
<feature type="transmembrane region" description="Helical" evidence="2">
    <location>
        <begin position="142"/>
        <end position="162"/>
    </location>
</feature>
<feature type="topological domain" description="Cytoplasmic" evidence="2">
    <location>
        <begin position="163"/>
        <end position="176"/>
    </location>
</feature>
<feature type="transmembrane region" description="Helical" evidence="2">
    <location>
        <begin position="177"/>
        <end position="194"/>
    </location>
</feature>
<feature type="topological domain" description="Periplasmic" evidence="1">
    <location>
        <position position="195"/>
    </location>
</feature>
<keyword id="KW-0029">Amino-acid transport</keyword>
<keyword id="KW-0997">Cell inner membrane</keyword>
<keyword id="KW-1003">Cell membrane</keyword>
<keyword id="KW-0472">Membrane</keyword>
<keyword id="KW-0812">Transmembrane</keyword>
<keyword id="KW-1133">Transmembrane helix</keyword>
<keyword id="KW-0813">Transport</keyword>
<evidence type="ECO:0000250" key="1">
    <source>
        <dbReference type="UniProtKB" id="P38101"/>
    </source>
</evidence>
<evidence type="ECO:0000255" key="2"/>
<evidence type="ECO:0000305" key="3"/>
<comment type="function">
    <text evidence="1">Exporter of O-acetylserine (OAS) and cysteine.</text>
</comment>
<comment type="catalytic activity">
    <reaction evidence="1">
        <text>O-acetyl-L-serine(in) = O-acetyl-L-serine(out)</text>
        <dbReference type="Rhea" id="RHEA:29659"/>
        <dbReference type="ChEBI" id="CHEBI:58340"/>
    </reaction>
    <physiologicalReaction direction="left-to-right" evidence="1">
        <dbReference type="Rhea" id="RHEA:29660"/>
    </physiologicalReaction>
</comment>
<comment type="catalytic activity">
    <reaction evidence="1">
        <text>L-cysteine(in) = L-cysteine(out)</text>
        <dbReference type="Rhea" id="RHEA:29655"/>
        <dbReference type="ChEBI" id="CHEBI:35235"/>
    </reaction>
    <physiologicalReaction direction="left-to-right" evidence="1">
        <dbReference type="Rhea" id="RHEA:29656"/>
    </physiologicalReaction>
</comment>
<comment type="subcellular location">
    <subcellularLocation>
        <location evidence="1">Cell inner membrane</location>
        <topology evidence="2">Multi-pass membrane protein</topology>
    </subcellularLocation>
</comment>
<comment type="similarity">
    <text evidence="3">Belongs to the Rht family.</text>
</comment>
<reference key="1">
    <citation type="journal article" date="2005" name="Nucleic Acids Res.">
        <title>The genome sequence of Salmonella enterica serovar Choleraesuis, a highly invasive and resistant zoonotic pathogen.</title>
        <authorList>
            <person name="Chiu C.-H."/>
            <person name="Tang P."/>
            <person name="Chu C."/>
            <person name="Hu S."/>
            <person name="Bao Q."/>
            <person name="Yu J."/>
            <person name="Chou Y.-Y."/>
            <person name="Wang H.-S."/>
            <person name="Lee Y.-S."/>
        </authorList>
    </citation>
    <scope>NUCLEOTIDE SEQUENCE [LARGE SCALE GENOMIC DNA]</scope>
    <source>
        <strain>SC-B67</strain>
    </source>
</reference>
<name>EAMB_SALCH</name>
<protein>
    <recommendedName>
        <fullName evidence="1">Cysteine/O-acetylserine efflux protein</fullName>
    </recommendedName>
</protein>